<protein>
    <recommendedName>
        <fullName>Altered inheritance of mitochondria protein 23, mitochondrial</fullName>
    </recommendedName>
</protein>
<evidence type="ECO:0000250" key="1"/>
<evidence type="ECO:0000255" key="2"/>
<evidence type="ECO:0000305" key="3"/>
<proteinExistence type="inferred from homology"/>
<reference key="1">
    <citation type="journal article" date="2009" name="Genome Res.">
        <title>Genome structure of a Saccharomyces cerevisiae strain widely used in bioethanol production.</title>
        <authorList>
            <person name="Argueso J.L."/>
            <person name="Carazzolle M.F."/>
            <person name="Mieczkowski P.A."/>
            <person name="Duarte F.M."/>
            <person name="Netto O.V.C."/>
            <person name="Missawa S.K."/>
            <person name="Galzerani F."/>
            <person name="Costa G.G.L."/>
            <person name="Vidal R.O."/>
            <person name="Noronha M.F."/>
            <person name="Dominska M."/>
            <person name="Andrietta M.G.S."/>
            <person name="Andrietta S.R."/>
            <person name="Cunha A.F."/>
            <person name="Gomes L.H."/>
            <person name="Tavares F.C.A."/>
            <person name="Alcarde A.R."/>
            <person name="Dietrich F.S."/>
            <person name="McCusker J.H."/>
            <person name="Petes T.D."/>
            <person name="Pereira G.A.G."/>
        </authorList>
    </citation>
    <scope>NUCLEOTIDE SEQUENCE [LARGE SCALE GENOMIC DNA]</scope>
    <source>
        <strain>JAY291</strain>
    </source>
</reference>
<accession>C7GPZ8</accession>
<sequence length="356" mass="41487">MLKVPLSDVLSQKMLFLKSFRYFHCTKYFSRDNASSTTDIFRNAMKRKRELANLKEQSHGNVARNAAFPKEYIKRPKQVPRNATNRKKILITWSTGTDRAKEAANSVVSEIFKKNHKGNIKVVDPTTHRIEPSNIRYFAKGIDLDKVGLSIVNVEQIDNENQIPLVKIVESRVALKKYSDFLAKKKEKELMELGVLNKSYKNLVTDKKEDNLKHIKISWQIESDDLKRQKAHEIVSLLKKGNKVTLYLDDKNNINSNNWLENFEELDRSQKGEPPRLPESVFQKRAAVLETLKEIVSEYANDPVLLGNMNSKMIMKLIPKDVKPQNNDKRALKELRKKERQEKLQKRIQRKKMNEM</sequence>
<name>AIM23_YEAS2</name>
<feature type="transit peptide" description="Mitochondrion" evidence="2">
    <location>
        <begin position="1"/>
        <end position="32"/>
    </location>
</feature>
<feature type="chain" id="PRO_0000399543" description="Altered inheritance of mitochondria protein 23, mitochondrial">
    <location>
        <begin position="33"/>
        <end position="356"/>
    </location>
</feature>
<organism>
    <name type="scientific">Saccharomyces cerevisiae (strain JAY291)</name>
    <name type="common">Baker's yeast</name>
    <dbReference type="NCBI Taxonomy" id="574961"/>
    <lineage>
        <taxon>Eukaryota</taxon>
        <taxon>Fungi</taxon>
        <taxon>Dikarya</taxon>
        <taxon>Ascomycota</taxon>
        <taxon>Saccharomycotina</taxon>
        <taxon>Saccharomycetes</taxon>
        <taxon>Saccharomycetales</taxon>
        <taxon>Saccharomycetaceae</taxon>
        <taxon>Saccharomyces</taxon>
    </lineage>
</organism>
<gene>
    <name type="primary">AIM23</name>
    <name type="ORF">C1Q_02381</name>
</gene>
<comment type="subcellular location">
    <subcellularLocation>
        <location evidence="1">Mitochondrion</location>
    </subcellularLocation>
</comment>
<comment type="similarity">
    <text evidence="3">Belongs to the AIM23 family.</text>
</comment>
<keyword id="KW-0496">Mitochondrion</keyword>
<keyword id="KW-0809">Transit peptide</keyword>
<dbReference type="EMBL" id="ACFL01000099">
    <property type="protein sequence ID" value="EEU07128.1"/>
    <property type="molecule type" value="Genomic_DNA"/>
</dbReference>
<dbReference type="SMR" id="C7GPZ8"/>
<dbReference type="Proteomes" id="UP000008073">
    <property type="component" value="Unassembled WGS sequence"/>
</dbReference>
<dbReference type="GO" id="GO:0005739">
    <property type="term" value="C:mitochondrion"/>
    <property type="evidence" value="ECO:0007669"/>
    <property type="project" value="UniProtKB-SubCell"/>
</dbReference>
<dbReference type="InterPro" id="IPR029427">
    <property type="entry name" value="AIM23"/>
</dbReference>
<dbReference type="Pfam" id="PF14877">
    <property type="entry name" value="mIF3"/>
    <property type="match status" value="1"/>
</dbReference>